<evidence type="ECO:0000250" key="1"/>
<evidence type="ECO:0000255" key="2"/>
<evidence type="ECO:0000305" key="3"/>
<comment type="subcellular location">
    <subcellularLocation>
        <location evidence="3">Secreted</location>
    </subcellularLocation>
</comment>
<comment type="similarity">
    <text evidence="3">Belongs to the 'GDSL' lipolytic enzyme family.</text>
</comment>
<accession>O22927</accession>
<reference key="1">
    <citation type="journal article" date="1999" name="Nature">
        <title>Sequence and analysis of chromosome 2 of the plant Arabidopsis thaliana.</title>
        <authorList>
            <person name="Lin X."/>
            <person name="Kaul S."/>
            <person name="Rounsley S.D."/>
            <person name="Shea T.P."/>
            <person name="Benito M.-I."/>
            <person name="Town C.D."/>
            <person name="Fujii C.Y."/>
            <person name="Mason T.M."/>
            <person name="Bowman C.L."/>
            <person name="Barnstead M.E."/>
            <person name="Feldblyum T.V."/>
            <person name="Buell C.R."/>
            <person name="Ketchum K.A."/>
            <person name="Lee J.J."/>
            <person name="Ronning C.M."/>
            <person name="Koo H.L."/>
            <person name="Moffat K.S."/>
            <person name="Cronin L.A."/>
            <person name="Shen M."/>
            <person name="Pai G."/>
            <person name="Van Aken S."/>
            <person name="Umayam L."/>
            <person name="Tallon L.J."/>
            <person name="Gill J.E."/>
            <person name="Adams M.D."/>
            <person name="Carrera A.J."/>
            <person name="Creasy T.H."/>
            <person name="Goodman H.M."/>
            <person name="Somerville C.R."/>
            <person name="Copenhaver G.P."/>
            <person name="Preuss D."/>
            <person name="Nierman W.C."/>
            <person name="White O."/>
            <person name="Eisen J.A."/>
            <person name="Salzberg S.L."/>
            <person name="Fraser C.M."/>
            <person name="Venter J.C."/>
        </authorList>
    </citation>
    <scope>NUCLEOTIDE SEQUENCE [LARGE SCALE GENOMIC DNA]</scope>
    <source>
        <strain>cv. Columbia</strain>
    </source>
</reference>
<reference key="2">
    <citation type="journal article" date="2017" name="Plant J.">
        <title>Araport11: a complete reannotation of the Arabidopsis thaliana reference genome.</title>
        <authorList>
            <person name="Cheng C.Y."/>
            <person name="Krishnakumar V."/>
            <person name="Chan A.P."/>
            <person name="Thibaud-Nissen F."/>
            <person name="Schobel S."/>
            <person name="Town C.D."/>
        </authorList>
    </citation>
    <scope>GENOME REANNOTATION</scope>
    <source>
        <strain>cv. Columbia</strain>
    </source>
</reference>
<reference key="3">
    <citation type="journal article" date="2006" name="Plant Biotechnol. J.">
        <title>Simultaneous high-throughput recombinational cloning of open reading frames in closed and open configurations.</title>
        <authorList>
            <person name="Underwood B.A."/>
            <person name="Vanderhaeghen R."/>
            <person name="Whitford R."/>
            <person name="Town C.D."/>
            <person name="Hilson P."/>
        </authorList>
    </citation>
    <scope>NUCLEOTIDE SEQUENCE [LARGE SCALE MRNA]</scope>
    <source>
        <strain>cv. Columbia</strain>
    </source>
</reference>
<reference key="4">
    <citation type="journal article" date="2004" name="Prog. Lipid Res.">
        <title>GDSL family of serine esterases/lipases.</title>
        <authorList>
            <person name="Akoh C.C."/>
            <person name="Lee G.-C."/>
            <person name="Liaw Y.-C."/>
            <person name="Huang T.-H."/>
            <person name="Shaw J.-F."/>
        </authorList>
    </citation>
    <scope>REVIEW</scope>
</reference>
<reference key="5">
    <citation type="journal article" date="2008" name="Pak. J. Biol. Sci.">
        <title>Sequence analysis of GDSL lipase gene family in Arabidopsis thaliana.</title>
        <authorList>
            <person name="Ling H."/>
        </authorList>
    </citation>
    <scope>GENE FAMILY</scope>
</reference>
<organism>
    <name type="scientific">Arabidopsis thaliana</name>
    <name type="common">Mouse-ear cress</name>
    <dbReference type="NCBI Taxonomy" id="3702"/>
    <lineage>
        <taxon>Eukaryota</taxon>
        <taxon>Viridiplantae</taxon>
        <taxon>Streptophyta</taxon>
        <taxon>Embryophyta</taxon>
        <taxon>Tracheophyta</taxon>
        <taxon>Spermatophyta</taxon>
        <taxon>Magnoliopsida</taxon>
        <taxon>eudicotyledons</taxon>
        <taxon>Gunneridae</taxon>
        <taxon>Pentapetalae</taxon>
        <taxon>rosids</taxon>
        <taxon>malvids</taxon>
        <taxon>Brassicales</taxon>
        <taxon>Brassicaceae</taxon>
        <taxon>Camelineae</taxon>
        <taxon>Arabidopsis</taxon>
    </lineage>
</organism>
<gene>
    <name type="ordered locus">At2g30310</name>
    <name type="ORF">T9D9.12</name>
</gene>
<keyword id="KW-0325">Glycoprotein</keyword>
<keyword id="KW-0378">Hydrolase</keyword>
<keyword id="KW-0442">Lipid degradation</keyword>
<keyword id="KW-0443">Lipid metabolism</keyword>
<keyword id="KW-1185">Reference proteome</keyword>
<keyword id="KW-0964">Secreted</keyword>
<keyword id="KW-0732">Signal</keyword>
<feature type="signal peptide" evidence="2">
    <location>
        <begin position="1"/>
        <end position="28"/>
    </location>
</feature>
<feature type="chain" id="PRO_0000367383" description="GDSL esterase/lipase At2g30310">
    <location>
        <begin position="29"/>
        <end position="359"/>
    </location>
</feature>
<feature type="active site" description="Nucleophile" evidence="1">
    <location>
        <position position="41"/>
    </location>
</feature>
<feature type="active site" evidence="1">
    <location>
        <position position="333"/>
    </location>
</feature>
<feature type="active site" evidence="1">
    <location>
        <position position="336"/>
    </location>
</feature>
<feature type="glycosylation site" description="N-linked (GlcNAc...) asparagine" evidence="2">
    <location>
        <position position="103"/>
    </location>
</feature>
<feature type="glycosylation site" description="N-linked (GlcNAc...) asparagine" evidence="2">
    <location>
        <position position="325"/>
    </location>
</feature>
<dbReference type="EC" id="3.1.1.-"/>
<dbReference type="EMBL" id="AC002338">
    <property type="protein sequence ID" value="AAC16947.1"/>
    <property type="molecule type" value="Genomic_DNA"/>
</dbReference>
<dbReference type="EMBL" id="CP002685">
    <property type="protein sequence ID" value="AEC08369.1"/>
    <property type="molecule type" value="Genomic_DNA"/>
</dbReference>
<dbReference type="EMBL" id="DQ056555">
    <property type="protein sequence ID" value="AAY78705.1"/>
    <property type="molecule type" value="mRNA"/>
</dbReference>
<dbReference type="PIR" id="H84706">
    <property type="entry name" value="H84706"/>
</dbReference>
<dbReference type="RefSeq" id="NP_180590.1">
    <property type="nucleotide sequence ID" value="NM_128584.2"/>
</dbReference>
<dbReference type="SMR" id="O22927"/>
<dbReference type="FunCoup" id="O22927">
    <property type="interactions" value="110"/>
</dbReference>
<dbReference type="STRING" id="3702.O22927"/>
<dbReference type="GlyGen" id="O22927">
    <property type="glycosylation" value="2 sites"/>
</dbReference>
<dbReference type="PaxDb" id="3702-AT2G30310.1"/>
<dbReference type="ProteomicsDB" id="221976"/>
<dbReference type="EnsemblPlants" id="AT2G30310.1">
    <property type="protein sequence ID" value="AT2G30310.1"/>
    <property type="gene ID" value="AT2G30310"/>
</dbReference>
<dbReference type="GeneID" id="817581"/>
<dbReference type="Gramene" id="AT2G30310.1">
    <property type="protein sequence ID" value="AT2G30310.1"/>
    <property type="gene ID" value="AT2G30310"/>
</dbReference>
<dbReference type="KEGG" id="ath:AT2G30310"/>
<dbReference type="Araport" id="AT2G30310"/>
<dbReference type="TAIR" id="AT2G30310"/>
<dbReference type="eggNOG" id="ENOG502QSNM">
    <property type="taxonomic scope" value="Eukaryota"/>
</dbReference>
<dbReference type="HOGENOM" id="CLU_015101_0_1_1"/>
<dbReference type="InParanoid" id="O22927"/>
<dbReference type="OMA" id="YERISWI"/>
<dbReference type="OrthoDB" id="1600564at2759"/>
<dbReference type="PhylomeDB" id="O22927"/>
<dbReference type="BioCyc" id="ARA:AT2G30310-MONOMER"/>
<dbReference type="PRO" id="PR:O22927"/>
<dbReference type="Proteomes" id="UP000006548">
    <property type="component" value="Chromosome 2"/>
</dbReference>
<dbReference type="ExpressionAtlas" id="O22927">
    <property type="expression patterns" value="baseline and differential"/>
</dbReference>
<dbReference type="GO" id="GO:0005576">
    <property type="term" value="C:extracellular region"/>
    <property type="evidence" value="ECO:0007669"/>
    <property type="project" value="UniProtKB-SubCell"/>
</dbReference>
<dbReference type="GO" id="GO:0016788">
    <property type="term" value="F:hydrolase activity, acting on ester bonds"/>
    <property type="evidence" value="ECO:0007669"/>
    <property type="project" value="InterPro"/>
</dbReference>
<dbReference type="GO" id="GO:0016042">
    <property type="term" value="P:lipid catabolic process"/>
    <property type="evidence" value="ECO:0007669"/>
    <property type="project" value="UniProtKB-KW"/>
</dbReference>
<dbReference type="CDD" id="cd01837">
    <property type="entry name" value="SGNH_plant_lipase_like"/>
    <property type="match status" value="1"/>
</dbReference>
<dbReference type="Gene3D" id="3.40.50.1110">
    <property type="entry name" value="SGNH hydrolase"/>
    <property type="match status" value="1"/>
</dbReference>
<dbReference type="InterPro" id="IPR001087">
    <property type="entry name" value="GDSL"/>
</dbReference>
<dbReference type="InterPro" id="IPR050592">
    <property type="entry name" value="GDSL_lipolytic_enzyme"/>
</dbReference>
<dbReference type="InterPro" id="IPR036514">
    <property type="entry name" value="SGNH_hydro_sf"/>
</dbReference>
<dbReference type="InterPro" id="IPR035669">
    <property type="entry name" value="SGNH_plant_lipase-like"/>
</dbReference>
<dbReference type="PANTHER" id="PTHR45642">
    <property type="entry name" value="GDSL ESTERASE/LIPASE EXL3"/>
    <property type="match status" value="1"/>
</dbReference>
<dbReference type="PANTHER" id="PTHR45642:SF148">
    <property type="entry name" value="GENOME ASSEMBLY, CHROMOSOME: A04"/>
    <property type="match status" value="1"/>
</dbReference>
<dbReference type="Pfam" id="PF00657">
    <property type="entry name" value="Lipase_GDSL"/>
    <property type="match status" value="1"/>
</dbReference>
<dbReference type="SUPFAM" id="SSF52266">
    <property type="entry name" value="SGNH hydrolase"/>
    <property type="match status" value="1"/>
</dbReference>
<sequence>MSTSKTIVFGLFVATLLVSCNVAANATTQPLFPAILIFGDSTVDTGNNNYHSQTIFKAKHLPYGVDLPGHEANGRYSNGKVISDVIASKLNIKELVPPFLQPNISHQDIVTGVSFASAGAGYDDRSSLSSKAIPVSQQPSMFKNYIARLKGIVGDKKAMEIINNALVVISAGPNDFILNFYDIPTRRLEYPTIHGYQEFILKRLDGFVRELYSLGCRNIVVGGLPPMGCLPIQMTAKMRNILRFCVEQENKDSVLYNQKLVKKLPEIQASLPGSNFLYANVYDPLMDMIQNPSKYGFKETKKGCCGTGYLETTFMCNPLTKTCPNHSDHLFWDSIHPSEAAYNYIGNFVDAQIRGWIKA</sequence>
<proteinExistence type="evidence at transcript level"/>
<name>GDL42_ARATH</name>
<protein>
    <recommendedName>
        <fullName>GDSL esterase/lipase At2g30310</fullName>
        <ecNumber>3.1.1.-</ecNumber>
    </recommendedName>
    <alternativeName>
        <fullName>Extracellular lipase At2g30310</fullName>
    </alternativeName>
</protein>